<accession>P32455</accession>
<accession>D3DT26</accession>
<accession>Q5T8M1</accession>
<keyword id="KW-0002">3D-structure</keyword>
<keyword id="KW-0051">Antiviral defense</keyword>
<keyword id="KW-1003">Cell membrane</keyword>
<keyword id="KW-0963">Cytoplasm</keyword>
<keyword id="KW-0968">Cytoplasmic vesicle</keyword>
<keyword id="KW-0333">Golgi apparatus</keyword>
<keyword id="KW-0342">GTP-binding</keyword>
<keyword id="KW-0378">Hydrolase</keyword>
<keyword id="KW-0391">Immunity</keyword>
<keyword id="KW-0399">Innate immunity</keyword>
<keyword id="KW-1017">Isopeptide bond</keyword>
<keyword id="KW-0449">Lipoprotein</keyword>
<keyword id="KW-0472">Membrane</keyword>
<keyword id="KW-0488">Methylation</keyword>
<keyword id="KW-0547">Nucleotide-binding</keyword>
<keyword id="KW-0597">Phosphoprotein</keyword>
<keyword id="KW-0636">Prenylation</keyword>
<keyword id="KW-1267">Proteomics identification</keyword>
<keyword id="KW-1185">Reference proteome</keyword>
<keyword id="KW-0964">Secreted</keyword>
<keyword id="KW-0832">Ubl conjugation</keyword>
<protein>
    <recommendedName>
        <fullName evidence="30">Guanylate-binding protein 1</fullName>
        <ecNumber evidence="7">3.6.1.-</ecNumber>
        <ecNumber evidence="3 7 19">3.6.5.-</ecNumber>
    </recommendedName>
    <alternativeName>
        <fullName evidence="29">GTP-binding protein 1</fullName>
        <shortName evidence="29">GBP-1</shortName>
        <shortName evidence="29">HuGBP-1</shortName>
        <shortName evidence="28">hGBP1</shortName>
    </alternativeName>
    <alternativeName>
        <fullName>Guanine nucleotide-binding protein 1</fullName>
    </alternativeName>
    <alternativeName>
        <fullName evidence="27">Interferon-induced guanylate-binding protein 1</fullName>
    </alternativeName>
</protein>
<sequence>MASEIHMTGPMCLIENTNGRLMANPEALKILSAITQPMVVVAIVGLYRTGKSYLMNKLAGKKKGFSLGSTVQSHTKGIWMWCVPHPKKPGHILVLLDTEGLGDVEKGDNQNDSWIFALAVLLSSTFVYNSIGTINQQAMDQLYYVTELTHRIRSKSSPDENENEVEDSADFVSFFPDFVWTLRDFSLDLEADGQPLTPDEYLTYSLKLKKGTSQKDETFNLPRLCIRKFFPKKKCFVFDRPVHRRKLAQLEKLQDEELDPEFVQQVADFCSYIFSNSKTKTLSGGIQVNGPRLESLVLTYVNAISSGDLPCMENAVLALAQIENSAAVQKAIAHYEQQMGQKVQLPTETLQELLDLHRDSEREAIEVFIRSSFKDVDHLFQKELAAQLEKKRDDFCKQNQEASSDRCSALLQVIFSPLEEEVKAGIYSKPGGYRLFVQKLQDLKKKYYEEPRKGIQAEEILQTYLKSKESMTDAILQTDQTLTEKEKEIEVERVKAESAQASAKMLQEMQRKNEQMMEQKERSYQEHLKQLTEKMENDRVQLLKEQERTLALKLQEQEQLLKEGFQKESRIMKNEIQDLQTKMRRRKACTIS</sequence>
<reference key="1">
    <citation type="journal article" date="1991" name="Mol. Cell. Biol.">
        <title>Interferon-induced guanylate-binding proteins lack an N(T)KXD consensus motif and bind GMP in addition to GDP and GTP.</title>
        <authorList>
            <person name="Cheng Y.-S.E."/>
            <person name="Patterson C.E."/>
            <person name="Staeheli P."/>
        </authorList>
    </citation>
    <scope>NUCLEOTIDE SEQUENCE [MRNA]</scope>
    <scope>VARIANTS SER-349 AND GLY-409</scope>
</reference>
<reference key="2">
    <citation type="submission" date="2003-05" db="EMBL/GenBank/DDBJ databases">
        <title>Cloning of human full-length CDSs in BD Creator(TM) system donor vector.</title>
        <authorList>
            <person name="Kalnine N."/>
            <person name="Chen X."/>
            <person name="Rolfs A."/>
            <person name="Halleck A."/>
            <person name="Hines L."/>
            <person name="Eisenstein S."/>
            <person name="Koundinya M."/>
            <person name="Raphael J."/>
            <person name="Moreira D."/>
            <person name="Kelley T."/>
            <person name="LaBaer J."/>
            <person name="Lin Y."/>
            <person name="Phelan M."/>
            <person name="Farmer A."/>
        </authorList>
    </citation>
    <scope>NUCLEOTIDE SEQUENCE [LARGE SCALE MRNA]</scope>
    <scope>VARIANTS SER-349 AND GLY-409</scope>
</reference>
<reference key="3">
    <citation type="journal article" date="2004" name="Nat. Genet.">
        <title>Complete sequencing and characterization of 21,243 full-length human cDNAs.</title>
        <authorList>
            <person name="Ota T."/>
            <person name="Suzuki Y."/>
            <person name="Nishikawa T."/>
            <person name="Otsuki T."/>
            <person name="Sugiyama T."/>
            <person name="Irie R."/>
            <person name="Wakamatsu A."/>
            <person name="Hayashi K."/>
            <person name="Sato H."/>
            <person name="Nagai K."/>
            <person name="Kimura K."/>
            <person name="Makita H."/>
            <person name="Sekine M."/>
            <person name="Obayashi M."/>
            <person name="Nishi T."/>
            <person name="Shibahara T."/>
            <person name="Tanaka T."/>
            <person name="Ishii S."/>
            <person name="Yamamoto J."/>
            <person name="Saito K."/>
            <person name="Kawai Y."/>
            <person name="Isono Y."/>
            <person name="Nakamura Y."/>
            <person name="Nagahari K."/>
            <person name="Murakami K."/>
            <person name="Yasuda T."/>
            <person name="Iwayanagi T."/>
            <person name="Wagatsuma M."/>
            <person name="Shiratori A."/>
            <person name="Sudo H."/>
            <person name="Hosoiri T."/>
            <person name="Kaku Y."/>
            <person name="Kodaira H."/>
            <person name="Kondo H."/>
            <person name="Sugawara M."/>
            <person name="Takahashi M."/>
            <person name="Kanda K."/>
            <person name="Yokoi T."/>
            <person name="Furuya T."/>
            <person name="Kikkawa E."/>
            <person name="Omura Y."/>
            <person name="Abe K."/>
            <person name="Kamihara K."/>
            <person name="Katsuta N."/>
            <person name="Sato K."/>
            <person name="Tanikawa M."/>
            <person name="Yamazaki M."/>
            <person name="Ninomiya K."/>
            <person name="Ishibashi T."/>
            <person name="Yamashita H."/>
            <person name="Murakawa K."/>
            <person name="Fujimori K."/>
            <person name="Tanai H."/>
            <person name="Kimata M."/>
            <person name="Watanabe M."/>
            <person name="Hiraoka S."/>
            <person name="Chiba Y."/>
            <person name="Ishida S."/>
            <person name="Ono Y."/>
            <person name="Takiguchi S."/>
            <person name="Watanabe S."/>
            <person name="Yosida M."/>
            <person name="Hotuta T."/>
            <person name="Kusano J."/>
            <person name="Kanehori K."/>
            <person name="Takahashi-Fujii A."/>
            <person name="Hara H."/>
            <person name="Tanase T.-O."/>
            <person name="Nomura Y."/>
            <person name="Togiya S."/>
            <person name="Komai F."/>
            <person name="Hara R."/>
            <person name="Takeuchi K."/>
            <person name="Arita M."/>
            <person name="Imose N."/>
            <person name="Musashino K."/>
            <person name="Yuuki H."/>
            <person name="Oshima A."/>
            <person name="Sasaki N."/>
            <person name="Aotsuka S."/>
            <person name="Yoshikawa Y."/>
            <person name="Matsunawa H."/>
            <person name="Ichihara T."/>
            <person name="Shiohata N."/>
            <person name="Sano S."/>
            <person name="Moriya S."/>
            <person name="Momiyama H."/>
            <person name="Satoh N."/>
            <person name="Takami S."/>
            <person name="Terashima Y."/>
            <person name="Suzuki O."/>
            <person name="Nakagawa S."/>
            <person name="Senoh A."/>
            <person name="Mizoguchi H."/>
            <person name="Goto Y."/>
            <person name="Shimizu F."/>
            <person name="Wakebe H."/>
            <person name="Hishigaki H."/>
            <person name="Watanabe T."/>
            <person name="Sugiyama A."/>
            <person name="Takemoto M."/>
            <person name="Kawakami B."/>
            <person name="Yamazaki M."/>
            <person name="Watanabe K."/>
            <person name="Kumagai A."/>
            <person name="Itakura S."/>
            <person name="Fukuzumi Y."/>
            <person name="Fujimori Y."/>
            <person name="Komiyama M."/>
            <person name="Tashiro H."/>
            <person name="Tanigami A."/>
            <person name="Fujiwara T."/>
            <person name="Ono T."/>
            <person name="Yamada K."/>
            <person name="Fujii Y."/>
            <person name="Ozaki K."/>
            <person name="Hirao M."/>
            <person name="Ohmori Y."/>
            <person name="Kawabata A."/>
            <person name="Hikiji T."/>
            <person name="Kobatake N."/>
            <person name="Inagaki H."/>
            <person name="Ikema Y."/>
            <person name="Okamoto S."/>
            <person name="Okitani R."/>
            <person name="Kawakami T."/>
            <person name="Noguchi S."/>
            <person name="Itoh T."/>
            <person name="Shigeta K."/>
            <person name="Senba T."/>
            <person name="Matsumura K."/>
            <person name="Nakajima Y."/>
            <person name="Mizuno T."/>
            <person name="Morinaga M."/>
            <person name="Sasaki M."/>
            <person name="Togashi T."/>
            <person name="Oyama M."/>
            <person name="Hata H."/>
            <person name="Watanabe M."/>
            <person name="Komatsu T."/>
            <person name="Mizushima-Sugano J."/>
            <person name="Satoh T."/>
            <person name="Shirai Y."/>
            <person name="Takahashi Y."/>
            <person name="Nakagawa K."/>
            <person name="Okumura K."/>
            <person name="Nagase T."/>
            <person name="Nomura N."/>
            <person name="Kikuchi H."/>
            <person name="Masuho Y."/>
            <person name="Yamashita R."/>
            <person name="Nakai K."/>
            <person name="Yada T."/>
            <person name="Nakamura Y."/>
            <person name="Ohara O."/>
            <person name="Isogai T."/>
            <person name="Sugano S."/>
        </authorList>
    </citation>
    <scope>NUCLEOTIDE SEQUENCE [LARGE SCALE MRNA]</scope>
    <source>
        <tissue>Placenta</tissue>
    </source>
</reference>
<reference key="4">
    <citation type="journal article" date="2006" name="Nature">
        <title>The DNA sequence and biological annotation of human chromosome 1.</title>
        <authorList>
            <person name="Gregory S.G."/>
            <person name="Barlow K.F."/>
            <person name="McLay K.E."/>
            <person name="Kaul R."/>
            <person name="Swarbreck D."/>
            <person name="Dunham A."/>
            <person name="Scott C.E."/>
            <person name="Howe K.L."/>
            <person name="Woodfine K."/>
            <person name="Spencer C.C.A."/>
            <person name="Jones M.C."/>
            <person name="Gillson C."/>
            <person name="Searle S."/>
            <person name="Zhou Y."/>
            <person name="Kokocinski F."/>
            <person name="McDonald L."/>
            <person name="Evans R."/>
            <person name="Phillips K."/>
            <person name="Atkinson A."/>
            <person name="Cooper R."/>
            <person name="Jones C."/>
            <person name="Hall R.E."/>
            <person name="Andrews T.D."/>
            <person name="Lloyd C."/>
            <person name="Ainscough R."/>
            <person name="Almeida J.P."/>
            <person name="Ambrose K.D."/>
            <person name="Anderson F."/>
            <person name="Andrew R.W."/>
            <person name="Ashwell R.I.S."/>
            <person name="Aubin K."/>
            <person name="Babbage A.K."/>
            <person name="Bagguley C.L."/>
            <person name="Bailey J."/>
            <person name="Beasley H."/>
            <person name="Bethel G."/>
            <person name="Bird C.P."/>
            <person name="Bray-Allen S."/>
            <person name="Brown J.Y."/>
            <person name="Brown A.J."/>
            <person name="Buckley D."/>
            <person name="Burton J."/>
            <person name="Bye J."/>
            <person name="Carder C."/>
            <person name="Chapman J.C."/>
            <person name="Clark S.Y."/>
            <person name="Clarke G."/>
            <person name="Clee C."/>
            <person name="Cobley V."/>
            <person name="Collier R.E."/>
            <person name="Corby N."/>
            <person name="Coville G.J."/>
            <person name="Davies J."/>
            <person name="Deadman R."/>
            <person name="Dunn M."/>
            <person name="Earthrowl M."/>
            <person name="Ellington A.G."/>
            <person name="Errington H."/>
            <person name="Frankish A."/>
            <person name="Frankland J."/>
            <person name="French L."/>
            <person name="Garner P."/>
            <person name="Garnett J."/>
            <person name="Gay L."/>
            <person name="Ghori M.R.J."/>
            <person name="Gibson R."/>
            <person name="Gilby L.M."/>
            <person name="Gillett W."/>
            <person name="Glithero R.J."/>
            <person name="Grafham D.V."/>
            <person name="Griffiths C."/>
            <person name="Griffiths-Jones S."/>
            <person name="Grocock R."/>
            <person name="Hammond S."/>
            <person name="Harrison E.S.I."/>
            <person name="Hart E."/>
            <person name="Haugen E."/>
            <person name="Heath P.D."/>
            <person name="Holmes S."/>
            <person name="Holt K."/>
            <person name="Howden P.J."/>
            <person name="Hunt A.R."/>
            <person name="Hunt S.E."/>
            <person name="Hunter G."/>
            <person name="Isherwood J."/>
            <person name="James R."/>
            <person name="Johnson C."/>
            <person name="Johnson D."/>
            <person name="Joy A."/>
            <person name="Kay M."/>
            <person name="Kershaw J.K."/>
            <person name="Kibukawa M."/>
            <person name="Kimberley A.M."/>
            <person name="King A."/>
            <person name="Knights A.J."/>
            <person name="Lad H."/>
            <person name="Laird G."/>
            <person name="Lawlor S."/>
            <person name="Leongamornlert D.A."/>
            <person name="Lloyd D.M."/>
            <person name="Loveland J."/>
            <person name="Lovell J."/>
            <person name="Lush M.J."/>
            <person name="Lyne R."/>
            <person name="Martin S."/>
            <person name="Mashreghi-Mohammadi M."/>
            <person name="Matthews L."/>
            <person name="Matthews N.S.W."/>
            <person name="McLaren S."/>
            <person name="Milne S."/>
            <person name="Mistry S."/>
            <person name="Moore M.J.F."/>
            <person name="Nickerson T."/>
            <person name="O'Dell C.N."/>
            <person name="Oliver K."/>
            <person name="Palmeiri A."/>
            <person name="Palmer S.A."/>
            <person name="Parker A."/>
            <person name="Patel D."/>
            <person name="Pearce A.V."/>
            <person name="Peck A.I."/>
            <person name="Pelan S."/>
            <person name="Phelps K."/>
            <person name="Phillimore B.J."/>
            <person name="Plumb R."/>
            <person name="Rajan J."/>
            <person name="Raymond C."/>
            <person name="Rouse G."/>
            <person name="Saenphimmachak C."/>
            <person name="Sehra H.K."/>
            <person name="Sheridan E."/>
            <person name="Shownkeen R."/>
            <person name="Sims S."/>
            <person name="Skuce C.D."/>
            <person name="Smith M."/>
            <person name="Steward C."/>
            <person name="Subramanian S."/>
            <person name="Sycamore N."/>
            <person name="Tracey A."/>
            <person name="Tromans A."/>
            <person name="Van Helmond Z."/>
            <person name="Wall M."/>
            <person name="Wallis J.M."/>
            <person name="White S."/>
            <person name="Whitehead S.L."/>
            <person name="Wilkinson J.E."/>
            <person name="Willey D.L."/>
            <person name="Williams H."/>
            <person name="Wilming L."/>
            <person name="Wray P.W."/>
            <person name="Wu Z."/>
            <person name="Coulson A."/>
            <person name="Vaudin M."/>
            <person name="Sulston J.E."/>
            <person name="Durbin R.M."/>
            <person name="Hubbard T."/>
            <person name="Wooster R."/>
            <person name="Dunham I."/>
            <person name="Carter N.P."/>
            <person name="McVean G."/>
            <person name="Ross M.T."/>
            <person name="Harrow J."/>
            <person name="Olson M.V."/>
            <person name="Beck S."/>
            <person name="Rogers J."/>
            <person name="Bentley D.R."/>
        </authorList>
    </citation>
    <scope>NUCLEOTIDE SEQUENCE [LARGE SCALE GENOMIC DNA]</scope>
</reference>
<reference key="5">
    <citation type="submission" date="2005-09" db="EMBL/GenBank/DDBJ databases">
        <authorList>
            <person name="Mural R.J."/>
            <person name="Istrail S."/>
            <person name="Sutton G.G."/>
            <person name="Florea L."/>
            <person name="Halpern A.L."/>
            <person name="Mobarry C.M."/>
            <person name="Lippert R."/>
            <person name="Walenz B."/>
            <person name="Shatkay H."/>
            <person name="Dew I."/>
            <person name="Miller J.R."/>
            <person name="Flanigan M.J."/>
            <person name="Edwards N.J."/>
            <person name="Bolanos R."/>
            <person name="Fasulo D."/>
            <person name="Halldorsson B.V."/>
            <person name="Hannenhalli S."/>
            <person name="Turner R."/>
            <person name="Yooseph S."/>
            <person name="Lu F."/>
            <person name="Nusskern D.R."/>
            <person name="Shue B.C."/>
            <person name="Zheng X.H."/>
            <person name="Zhong F."/>
            <person name="Delcher A.L."/>
            <person name="Huson D.H."/>
            <person name="Kravitz S.A."/>
            <person name="Mouchard L."/>
            <person name="Reinert K."/>
            <person name="Remington K.A."/>
            <person name="Clark A.G."/>
            <person name="Waterman M.S."/>
            <person name="Eichler E.E."/>
            <person name="Adams M.D."/>
            <person name="Hunkapiller M.W."/>
            <person name="Myers E.W."/>
            <person name="Venter J.C."/>
        </authorList>
    </citation>
    <scope>NUCLEOTIDE SEQUENCE [LARGE SCALE GENOMIC DNA]</scope>
</reference>
<reference key="6">
    <citation type="journal article" date="2004" name="Genome Res.">
        <title>The status, quality, and expansion of the NIH full-length cDNA project: the Mammalian Gene Collection (MGC).</title>
        <authorList>
            <consortium name="The MGC Project Team"/>
        </authorList>
    </citation>
    <scope>NUCLEOTIDE SEQUENCE [LARGE SCALE MRNA]</scope>
    <scope>VARIANTS SER-349 AND GLY-409</scope>
    <source>
        <tissue>Uterus</tissue>
    </source>
</reference>
<reference key="7">
    <citation type="journal article" date="1994" name="J. Biol. Chem.">
        <title>The interferon-induced 67-kDa guanylate-binding protein (hGBP1) is a GTPase that converts GTP to GMP.</title>
        <authorList>
            <person name="Schwemmle M."/>
            <person name="Staeheli P."/>
        </authorList>
    </citation>
    <scope>FUNCTION</scope>
    <scope>CATALYTIC ACTIVITY</scope>
</reference>
<reference key="8">
    <citation type="journal article" date="1996" name="J. Leukoc. Biol.">
        <title>Prenylation of an interferon-gamma-induced GTP-binding protein: the human guanylate binding protein, huGBP1.</title>
        <authorList>
            <person name="Nantais D.E."/>
            <person name="Schwemmle M."/>
            <person name="Stickney J.T."/>
            <person name="Vestal D.J."/>
            <person name="Buss J.E."/>
        </authorList>
    </citation>
    <scope>ISOPRENYLATION AT CYS-589</scope>
    <scope>METHYLATION AT CYS-589</scope>
</reference>
<reference key="9">
    <citation type="journal article" date="2005" name="Proc. Natl. Acad. Sci. U.S.A.">
        <title>Golgi targeting of human guanylate-binding protein-1 requires nucleotide binding, isoprenylation, and an IFN-gamma-inducible cofactor.</title>
        <authorList>
            <person name="Modiano N."/>
            <person name="Lu Y.E."/>
            <person name="Cresswell P."/>
        </authorList>
    </citation>
    <scope>SUBCELLULAR LOCATION</scope>
</reference>
<reference key="10">
    <citation type="journal article" date="2006" name="Am. J. Pathol.">
        <title>Human guanylate binding protein-1 is a secreted GTPase present in increased concentrations in the cerebrospinal fluid of patients with bacterial meningitis.</title>
        <authorList>
            <person name="Naschberger E."/>
            <person name="Lubeseder-Martellato C."/>
            <person name="Meyer N."/>
            <person name="Gessner R."/>
            <person name="Kremmer E."/>
            <person name="Gessner A."/>
            <person name="Sturzl M."/>
        </authorList>
    </citation>
    <scope>SUBCELLULAR LOCATION</scope>
</reference>
<reference key="11">
    <citation type="journal article" date="2007" name="J. Interferon Cytokine Res.">
        <title>Unique features of different members of the human guanylate-binding protein family.</title>
        <authorList>
            <person name="Tripal P."/>
            <person name="Bauer M."/>
            <person name="Naschberger E."/>
            <person name="Mortinger T."/>
            <person name="Hohenadl C."/>
            <person name="Cornali E."/>
            <person name="Thurau M."/>
            <person name="Sturzl M."/>
        </authorList>
    </citation>
    <scope>SUBCELLULAR LOCATION</scope>
    <scope>INDUCTION</scope>
</reference>
<reference key="12">
    <citation type="journal article" date="2009" name="Sci. Signal.">
        <title>Quantitative phosphoproteomic analysis of T cell receptor signaling reveals system-wide modulation of protein-protein interactions.</title>
        <authorList>
            <person name="Mayya V."/>
            <person name="Lundgren D.H."/>
            <person name="Hwang S.-I."/>
            <person name="Rezaul K."/>
            <person name="Wu L."/>
            <person name="Eng J.K."/>
            <person name="Rodionov V."/>
            <person name="Han D.K."/>
        </authorList>
    </citation>
    <scope>IDENTIFICATION BY MASS SPECTROMETRY [LARGE SCALE ANALYSIS]</scope>
    <source>
        <tissue>Leukemic T-cell</tissue>
    </source>
</reference>
<reference key="13">
    <citation type="journal article" date="2010" name="PLoS ONE">
        <title>Intracellular trafficking of guanylate-binding proteins is regulated by heterodimerization in a hierarchical manner.</title>
        <authorList>
            <person name="Britzen-Laurent N."/>
            <person name="Bauer M."/>
            <person name="Berton V."/>
            <person name="Fischer N."/>
            <person name="Syguda A."/>
            <person name="Reipschlager S."/>
            <person name="Naschberger E."/>
            <person name="Herrmann C."/>
            <person name="Sturzl M."/>
        </authorList>
    </citation>
    <scope>SUBCELLULAR LOCATION</scope>
    <scope>DIMERIZATION</scope>
    <scope>ISOPRENYLATION</scope>
    <scope>MUTAGENESIS OF LYS-51; 227-ARG-LYS-228 AND 589-CYS--SER-592</scope>
</reference>
<reference key="14">
    <citation type="journal article" date="2012" name="FASEB J.">
        <title>A new splice variant of the human guanylate-binding protein 3 mediates anti-influenza activity through inhibition of viral transcription and replication.</title>
        <authorList>
            <person name="Nordmann A."/>
            <person name="Wixler L."/>
            <person name="Boergeling Y."/>
            <person name="Wixler V."/>
            <person name="Ludwig S."/>
        </authorList>
    </citation>
    <scope>FUNCTION</scope>
</reference>
<reference key="15">
    <citation type="journal article" date="2017" name="Proc. Natl. Acad. Sci. U.S.A.">
        <title>Nucleotide-dependent farnesyl switch orchestrates polymerization and membrane binding of human guanylate-binding protein 1.</title>
        <authorList>
            <person name="Shydlovskyi S."/>
            <person name="Zienert A.Y."/>
            <person name="Ince S."/>
            <person name="Dovengerds C."/>
            <person name="Hohendahl A."/>
            <person name="Dargazanli J.M."/>
            <person name="Blum A."/>
            <person name="Guenther S.D."/>
            <person name="Kladt N."/>
            <person name="Stuerzl M."/>
            <person name="Schauss A.C."/>
            <person name="Kutsch M."/>
            <person name="Roux A."/>
            <person name="Praefcke G.J.K."/>
            <person name="Herrmann C."/>
        </authorList>
    </citation>
    <scope>FUNCTION</scope>
    <scope>CATALYTIC ACTIVITY</scope>
    <scope>ISOPRENYLATION</scope>
    <scope>MUTAGENESIS OF ARG-48 AND LYS-76</scope>
</reference>
<reference key="16">
    <citation type="journal article" date="2017" name="Cell Host Microbe">
        <title>GBPs inhibit motility of Shigella flexneri but are targeted for degradation by the bacterial ubiquitin ligase IpaH9.8.</title>
        <authorList>
            <person name="Wandel M.P."/>
            <person name="Pathe C."/>
            <person name="Werner E.I."/>
            <person name="Ellison C.J."/>
            <person name="Boyle K.B."/>
            <person name="von der Malsburg A."/>
            <person name="Rohde J."/>
            <person name="Randow F."/>
        </authorList>
    </citation>
    <scope>UBIQUITINATION (MICROBIAL INFECTION)</scope>
</reference>
<reference key="17">
    <citation type="journal article" date="2017" name="MBio">
        <title>Detection of cytosolic Shigella flexneri via a C-terminal triple-arginine motif of GBP1 inhibits actin-based motility.</title>
        <authorList>
            <person name="Piro A.S."/>
            <person name="Hernandez D."/>
            <person name="Luoma S."/>
            <person name="Feeley E.M."/>
            <person name="Finethy R."/>
            <person name="Yirga A."/>
            <person name="Frickel E.M."/>
            <person name="Lesser C.F."/>
            <person name="Coers J."/>
        </authorList>
    </citation>
    <scope>SUBCELLULAR LOCATION</scope>
    <scope>MUTAGENESIS OF 584-ARG--ARG-586</scope>
</reference>
<reference key="18">
    <citation type="journal article" date="2017" name="Nature">
        <title>Ubiquitination and degradation of GBPs by a Shigella effector to suppress host defence.</title>
        <authorList>
            <person name="Li P."/>
            <person name="Jiang W."/>
            <person name="Yu Q."/>
            <person name="Liu W."/>
            <person name="Zhou P."/>
            <person name="Li J."/>
            <person name="Xu J."/>
            <person name="Xu B."/>
            <person name="Wang F."/>
            <person name="Shao F."/>
        </authorList>
    </citation>
    <scope>UBIQUITINATION AT LYS-207; LYS-209; LYS-210; LYS-382; LYS-562; LYS-567; LYS-573 AND LYS-587 (MICROBIAL INFECTION)</scope>
    <scope>FUNCTION</scope>
    <scope>ISOPRENYLATION AT CYS-589</scope>
    <scope>MUTAGENESIS OF ARG-48; ASP-184; LYS-207; LYS-209; LYS-210; LYS-382; LYS-562; LYS-567; LYS-573; LYS-587 AND CYS-589</scope>
</reference>
<reference key="19">
    <citation type="journal article" date="2019" name="EMBO J.">
        <title>Human GBP1 is a microbe-specific gatekeeper of macrophage apoptosis and pyroptosis.</title>
        <authorList>
            <person name="Fisch D."/>
            <person name="Bando H."/>
            <person name="Clough B."/>
            <person name="Hornung V."/>
            <person name="Yamamoto M."/>
            <person name="Shenoy A.R."/>
            <person name="Frickel E.M."/>
        </authorList>
    </citation>
    <scope>FUNCTION</scope>
    <scope>SUBCELLULAR LOCATION</scope>
    <scope>ISOPRENYLATION AT CYS-589</scope>
    <scope>MUTAGENESIS OF LYS-51; 227-ARG-LYS-228 AND CYS-589</scope>
</reference>
<reference key="20">
    <citation type="journal article" date="2020" name="EMBO J.">
        <title>Direct binding of polymeric GBP1 to LPS disrupts bacterial cell envelope functions.</title>
        <authorList>
            <person name="Kutsch M."/>
            <person name="Sistemich L."/>
            <person name="Lesser C.F."/>
            <person name="Goldberg M.B."/>
            <person name="Herrmann C."/>
            <person name="Coers J."/>
        </authorList>
    </citation>
    <scope>FUNCTION</scope>
    <scope>CATALYTIC ACTIVITY</scope>
    <scope>SUBUNIT</scope>
    <scope>SUBCELLULAR LOCATION</scope>
    <scope>ISOPRENYLATION AT CYS-589</scope>
    <scope>MUTAGENESIS OF ARG-48; LYS-51; HIS-74 AND 584-ARG--ARG-586</scope>
</reference>
<reference key="21">
    <citation type="journal article" date="2020" name="Nat. Commun.">
        <title>Human GBP1 binds LPS to initiate assembly of a caspase-4 activating platform on cytosolic bacteria.</title>
        <authorList>
            <person name="Santos J.C."/>
            <person name="Boucher D."/>
            <person name="Schneider L.K."/>
            <person name="Demarco B."/>
            <person name="Dilucca M."/>
            <person name="Shkarina K."/>
            <person name="Heilig R."/>
            <person name="Chen K.W."/>
            <person name="Lim R.Y.H."/>
            <person name="Broz P."/>
        </authorList>
    </citation>
    <scope>FUNCTION</scope>
    <scope>CATALYTIC ACTIVITY</scope>
    <scope>SUBUNIT</scope>
    <scope>SUBCELLULAR LOCATION</scope>
    <scope>MUTAGENESIS OF 61-LYS--LYS-63; 87-LYS-LYS-88; 207-LYS--LYS-210 AND 244-ARG--LYS-246</scope>
</reference>
<reference key="22">
    <citation type="journal article" date="2023" name="Proc. Natl. Acad. Sci. U.S.A.">
        <title>Shigella IpaH9.8 limits GBP1-dependent LPS release from intracytosolic bacteria to suppress caspase-4 activation.</title>
        <authorList>
            <person name="Goers L."/>
            <person name="Kim K."/>
            <person name="Stedman T.C."/>
            <person name="Canning P.J."/>
            <person name="Mou X."/>
            <person name="Ernst N.H."/>
            <person name="Coers J."/>
            <person name="Lesser C.F."/>
        </authorList>
    </citation>
    <scope>UBIQUITINATION (MICROBIAL INFECTION)</scope>
</reference>
<reference key="23">
    <citation type="journal article" date="2000" name="Nature">
        <title>Structure of human guanylate-binding protein 1 representing a unique class of GTP-binding proteins.</title>
        <authorList>
            <person name="Prakash B."/>
            <person name="Praefcke G.J.K."/>
            <person name="Renault L."/>
            <person name="Wittinghofer A."/>
            <person name="Herrmann C."/>
        </authorList>
    </citation>
    <scope>X-RAY CRYSTALLOGRAPHY (1.8 ANGSTROMS)</scope>
    <scope>GTP-BINDING</scope>
</reference>
<reference key="24">
    <citation type="journal article" date="2000" name="EMBO J.">
        <title>Triphosphate structure of guanylate-binding protein 1 and implications for nucleotide binding and GTPase mechanism.</title>
        <authorList>
            <person name="Prakash B."/>
            <person name="Renault L."/>
            <person name="Praefcke G.J."/>
            <person name="Herrmann C."/>
            <person name="Wittinghofer A."/>
        </authorList>
    </citation>
    <scope>X-RAY CRYSTALLOGRAPHY (1.7 ANGSTROMS) IN COMPLEX WITH GTP ANALOG</scope>
    <scope>GTP-BINDING</scope>
</reference>
<reference evidence="36 37 38 39" key="25">
    <citation type="journal article" date="2006" name="Nature">
        <title>How guanylate-binding proteins achieve assembly-stimulated processive cleavage of GTP to GMP.</title>
        <authorList>
            <person name="Ghosh A."/>
            <person name="Praefcke G.J."/>
            <person name="Renault L."/>
            <person name="Wittinghofer A."/>
            <person name="Herrmann C."/>
        </authorList>
    </citation>
    <scope>X-RAY CRYSTALLOGRAPHY (2.22 ANGSTROMS) OF 1-317 IN COMPLEX WITH GDP AND GMP</scope>
    <scope>FUNCTION</scope>
    <scope>CATALYTIC ACTIVITY</scope>
    <scope>SUBUNIT</scope>
</reference>
<reference evidence="40 41" key="26">
    <citation type="journal article" date="2019" name="PLoS Pathog.">
        <title>Structural mechanism for guanylate-binding proteins (GBPs) targeting by the Shigella E3 ligase IpaH9.8.</title>
        <authorList>
            <person name="Ji C."/>
            <person name="Du S."/>
            <person name="Li P."/>
            <person name="Zhu Q."/>
            <person name="Yang X."/>
            <person name="Long C."/>
            <person name="Yu J."/>
            <person name="Shao F."/>
            <person name="Xiao J."/>
        </authorList>
    </citation>
    <scope>X-RAY CRYSTALLOGRAPHY (2.31 ANGSTROMS) IN COMPLEX WITH S.FLEXNERI IPAH9.8</scope>
    <scope>UBIQUITINATION (MICROBIAL INFECTION)</scope>
</reference>
<reference evidence="42" key="27">
    <citation type="journal article" date="2020" name="Commun. Biol.">
        <title>Substrate-binding destabilizes the hydrophobic cluster to relieve the autoinhibition of bacterial ubiquitin ligase IpaH9.8.</title>
        <authorList>
            <person name="Ye Y."/>
            <person name="Xiong Y."/>
            <person name="Huang H."/>
        </authorList>
    </citation>
    <scope>X-RAY CRYSTALLOGRAPHY (3.72 ANGSTROMS) IN COMPLEX WITH S.FLEXNERI IPAH9.8</scope>
    <scope>UBIQUITINATION (MICROBIAL INFECTION)</scope>
</reference>
<reference evidence="43" key="28">
    <citation type="journal article" date="2023" name="Science">
        <title>PIM1 controls GBP1 activity to limit self-damage and to guard against pathogen infection.</title>
        <authorList>
            <person name="Fisch D."/>
            <person name="Pfleiderer M.M."/>
            <person name="Anastasakou E."/>
            <person name="Mackie G.M."/>
            <person name="Wendt F."/>
            <person name="Liu X."/>
            <person name="Clough B."/>
            <person name="Lara-Reyna S."/>
            <person name="Encheva V."/>
            <person name="Snijders A.P."/>
            <person name="Bando H."/>
            <person name="Yamamoto M."/>
            <person name="Beggs A.D."/>
            <person name="Mercer J."/>
            <person name="Shenoy A.R."/>
            <person name="Wollscheid B."/>
            <person name="Maslowski K.M."/>
            <person name="Galej W.P."/>
            <person name="Frickel E.M."/>
        </authorList>
    </citation>
    <scope>STRUCTURE BY ELECTRON MICROSCOPY (5.12 ANGSTROMS) OF 7-583 IN COMPLEX WITH SFN</scope>
    <scope>FUNCTION</scope>
    <scope>SUBCELLULAR LOCATION</scope>
    <scope>INTERACTION WITH SFN</scope>
    <scope>PHOSPHORYLATION AT SER-156 AND THR-590</scope>
    <scope>MUTAGENESIS OF ARG-151; 153-ARG--PRO-158; ARG-153; LYS-155; SER-156; SER-157; TYR-427 AND THR-590</scope>
</reference>
<name>GBP1_HUMAN</name>
<comment type="function">
    <text evidence="1 7 12 15 18 19 20 23 24">Interferon (IFN)-inducible GTPase that plays important roles in innate immunity against a diverse range of bacterial, viral and protozoan pathogens (PubMed:16511497, PubMed:22106366, PubMed:29144452, PubMed:31268602, PubMed:32510692, PubMed:32581219, PubMed:37797010, PubMed:7512561). Hydrolyzes GTP to GMP in two consecutive cleavage reactions: GTP is first hydrolyzed to GDP and then to GMP in a processive manner (PubMed:16511497, PubMed:32510692, PubMed:7512561). Following infection, recruited to the pathogen-containing vacuoles or vacuole-escaped bacteria and promotes both inflammasome assembly and autophagy (PubMed:29144452, PubMed:31268602). Acts as a positive regulator of inflammasome assembly by facilitating the detection of inflammasome ligands from pathogens (PubMed:31268602, PubMed:32510692, PubMed:32581219). Involved in the lysis of pathogen-containing vacuoles, releasing pathogens into the cytosol (By similarity). Following pathogen release in the cytosol, forms a protein coat in a GTPase-dependent manner that encapsulates pathogens and promotes the detection of ligands by pattern recognition receptors (PubMed:32510692, PubMed:32581219). Plays a key role in inflammasome assembly in response to infection by Gram-negative bacteria: following pathogen release in the cytosol, forms a protein coat that encapsulates Gram-negative bacteria and directly binds to lipopolysaccharide (LPS), disrupting the O-antigen barrier and unmasking lipid A that is that detected by the non-canonical inflammasome effector CASP4/CASP11 (PubMed:32510692, PubMed:32581219). Also promotes recruitment of proteins that mediate bacterial cytolysis, leading to release double-stranded DNA (dsDNA) that activates the AIM2 inflammasome (PubMed:31268602). Involved in autophagy by regulating bacteriolytic peptide generation via its interaction with ubiquitin-binding protein SQSTM1, which delivers monoubiquitinated proteins to autolysosomes for the generation of bacteriolytic peptides (By similarity). Confers protection to several pathogens, including the bacterial pathogens L.monocytogenes and M.bovis BCG as well as the protozoan pathogen T.gondii (PubMed:31268602). Exhibits antiviral activity against influenza virus (PubMed:22106366).</text>
</comment>
<comment type="catalytic activity">
    <reaction evidence="3 7 13 19">
        <text>GTP + H2O = GDP + phosphate + H(+)</text>
        <dbReference type="Rhea" id="RHEA:19669"/>
        <dbReference type="ChEBI" id="CHEBI:15377"/>
        <dbReference type="ChEBI" id="CHEBI:15378"/>
        <dbReference type="ChEBI" id="CHEBI:37565"/>
        <dbReference type="ChEBI" id="CHEBI:43474"/>
        <dbReference type="ChEBI" id="CHEBI:58189"/>
    </reaction>
    <physiologicalReaction direction="left-to-right" evidence="3 7 13 19 20">
        <dbReference type="Rhea" id="RHEA:19670"/>
    </physiologicalReaction>
</comment>
<comment type="catalytic activity">
    <reaction evidence="7 13 19 20">
        <text>GDP + H2O = GMP + phosphate + H(+)</text>
        <dbReference type="Rhea" id="RHEA:22156"/>
        <dbReference type="ChEBI" id="CHEBI:15377"/>
        <dbReference type="ChEBI" id="CHEBI:15378"/>
        <dbReference type="ChEBI" id="CHEBI:43474"/>
        <dbReference type="ChEBI" id="CHEBI:58115"/>
        <dbReference type="ChEBI" id="CHEBI:58189"/>
    </reaction>
    <physiologicalReaction direction="left-to-right" evidence="7 13 19">
        <dbReference type="Rhea" id="RHEA:22157"/>
    </physiologicalReaction>
</comment>
<comment type="subunit">
    <text evidence="1 4 7 11 13 19 20 23">Homodimer; homodimerization occurs upon GTP-binding and is required for the second hydrolysis step from GDP to GMP (PubMed:10970849, PubMed:16511497). Undergoes conformational changes and oligomerization upon GTP-binding and hydrolysis (PubMed:28645896, PubMed:32510692, PubMed:32581219). Heterodimer with other family members, including GBP2, GBP3, GBP4 and GBP5 (PubMed:10970849, PubMed:16511497, PubMed:32581219). Dimerization regulates subcellular location to membranous structures (PubMed:21151871). Interacts with SQSTM1 (By similarity). Interacts (when phosphorylated) with 14-3-3 protein sigma (SFN); leading to GBP1 retention in the cytosol and inactivation (PubMed:37797010).</text>
</comment>
<comment type="interaction">
    <interactant intactId="EBI-2869161">
        <id>P32455</id>
    </interactant>
    <interactant intactId="EBI-2869161">
        <id>P32455</id>
        <label>GBP1</label>
    </interactant>
    <organismsDiffer>false</organismsDiffer>
    <experiments>15</experiments>
</comment>
<comment type="interaction">
    <interactant intactId="EBI-2869161">
        <id>P32455</id>
    </interactant>
    <interactant intactId="EBI-714388">
        <id>P32456</id>
        <label>GBP2</label>
    </interactant>
    <organismsDiffer>false</organismsDiffer>
    <experiments>11</experiments>
</comment>
<comment type="interaction">
    <interactant intactId="EBI-2869161">
        <id>P32455</id>
    </interactant>
    <interactant intactId="EBI-2798916">
        <id>Q9H0R5</id>
        <label>GBP3</label>
    </interactant>
    <organismsDiffer>false</organismsDiffer>
    <experiments>5</experiments>
</comment>
<comment type="interaction">
    <interactant intactId="EBI-2869161">
        <id>P32455</id>
    </interactant>
    <interactant intactId="EBI-20840650">
        <id>Q96PP9</id>
        <label>GBP4</label>
    </interactant>
    <organismsDiffer>false</organismsDiffer>
    <experiments>2</experiments>
</comment>
<comment type="interaction">
    <interactant intactId="EBI-2869161">
        <id>P32455</id>
    </interactant>
    <interactant intactId="EBI-749932">
        <id>Q96PP8</id>
        <label>GBP5</label>
    </interactant>
    <organismsDiffer>false</organismsDiffer>
    <experiments>11</experiments>
</comment>
<comment type="interaction">
    <interactant intactId="EBI-2869161">
        <id>P32455</id>
    </interactant>
    <interactant intactId="EBI-749211">
        <id>Q9NYH9</id>
        <label>UTP6</label>
    </interactant>
    <organismsDiffer>false</organismsDiffer>
    <experiments>2</experiments>
</comment>
<comment type="subcellular location">
    <subcellularLocation>
        <location evidence="15 16 18">Cytoplasmic vesicle membrane</location>
        <topology evidence="11">Lipid-anchor</topology>
        <orientation evidence="11">Cytoplasmic side</orientation>
    </subcellularLocation>
    <subcellularLocation>
        <location evidence="6">Golgi apparatus membrane</location>
        <topology evidence="11">Lipid-anchor</topology>
        <orientation evidence="11">Cytoplasmic side</orientation>
    </subcellularLocation>
    <subcellularLocation>
        <location evidence="11">Cell membrane</location>
        <topology evidence="11">Lipid-anchor</topology>
        <orientation evidence="11">Cytoplasmic side</orientation>
    </subcellularLocation>
    <subcellularLocation>
        <location evidence="11 23">Cytoplasm</location>
        <location evidence="11 23">Cytosol</location>
    </subcellularLocation>
    <subcellularLocation>
        <location evidence="8">Secreted</location>
    </subcellularLocation>
    <text evidence="6 8 15 18 19 20 23">Localizes to pathogen-containing vacuoles or to the cell surface of bacteria that escaped vacuoles (PubMed:29144452, PubMed:31268602, PubMed:32510692, PubMed:32581219). Secreted from endothelial cells in the cerebrospinal fluid, upon bacterial challenge and independently of IFNG induction (PubMed:16936281). Golgi membrane localization requires isoprenylation and the presence of another IFNG-induced factor (PubMed:15937107). Sequestered in the cytosol following phosphorylation by PIM1 and subsequent interaction with 14-3-3 protein sigma (SFN) (PubMed:37797010).</text>
</comment>
<comment type="induction">
    <text evidence="10">By IFNG during macrophage activation, and by TNF and IL1B.</text>
</comment>
<comment type="PTM">
    <text evidence="11 13 18 19">Isoprenylation is required for proper subcellular location.</text>
</comment>
<comment type="PTM">
    <text evidence="23">Phosphorylated at Ser-156 by PIM1 in absence of infection, inhibits GBP1: phosphorylation promotes interaction with 14-3-3 protein sigma (SFN), leading to GBP1 retention in the cytosol (PubMed:37797010). Dephosphorylated in response to infection, liberating GBP1 (PubMed:37797010).</text>
</comment>
<comment type="PTM">
    <text evidence="14 15 17 21 22">(Microbial infection) Ubiquitinated by S.flexneri IpaH9.8, leading to its degradation by the proteasome, thereby preventing its ability to promote host defense against bacterial infection.</text>
</comment>
<comment type="similarity">
    <text evidence="2">Belongs to the TRAFAC class dynamin-like GTPase superfamily. GB1/RHD3 GTPase family. GB1 subfamily.</text>
</comment>
<comment type="online information" name="Atlas of Genetics and Cytogenetics in Oncology and Haematology">
    <link uri="https://atlasgeneticsoncology.org/gene/50147/GBP1"/>
</comment>
<proteinExistence type="evidence at protein level"/>
<dbReference type="EC" id="3.6.1.-" evidence="7"/>
<dbReference type="EC" id="3.6.5.-" evidence="3 7 19"/>
<dbReference type="EMBL" id="M55542">
    <property type="protein sequence ID" value="AAA35871.1"/>
    <property type="molecule type" value="mRNA"/>
</dbReference>
<dbReference type="EMBL" id="BT006847">
    <property type="protein sequence ID" value="AAP35493.1"/>
    <property type="molecule type" value="mRNA"/>
</dbReference>
<dbReference type="EMBL" id="AK291783">
    <property type="protein sequence ID" value="BAF84472.1"/>
    <property type="molecule type" value="mRNA"/>
</dbReference>
<dbReference type="EMBL" id="AL160008">
    <property type="status" value="NOT_ANNOTATED_CDS"/>
    <property type="molecule type" value="Genomic_DNA"/>
</dbReference>
<dbReference type="EMBL" id="CH471097">
    <property type="protein sequence ID" value="EAW73148.1"/>
    <property type="molecule type" value="Genomic_DNA"/>
</dbReference>
<dbReference type="EMBL" id="CH471097">
    <property type="protein sequence ID" value="EAW73150.1"/>
    <property type="molecule type" value="Genomic_DNA"/>
</dbReference>
<dbReference type="EMBL" id="BC002666">
    <property type="protein sequence ID" value="AAH02666.1"/>
    <property type="molecule type" value="mRNA"/>
</dbReference>
<dbReference type="CCDS" id="CCDS718.1"/>
<dbReference type="PIR" id="A41268">
    <property type="entry name" value="A41268"/>
</dbReference>
<dbReference type="RefSeq" id="NP_002044.2">
    <property type="nucleotide sequence ID" value="NM_002053.3"/>
</dbReference>
<dbReference type="PDB" id="1DG3">
    <property type="method" value="X-ray"/>
    <property type="resolution" value="1.80 A"/>
    <property type="chains" value="A=1-592"/>
</dbReference>
<dbReference type="PDB" id="1F5N">
    <property type="method" value="X-ray"/>
    <property type="resolution" value="1.70 A"/>
    <property type="chains" value="A=1-592"/>
</dbReference>
<dbReference type="PDB" id="2B8W">
    <property type="method" value="X-ray"/>
    <property type="resolution" value="2.22 A"/>
    <property type="chains" value="A/B=1-317"/>
</dbReference>
<dbReference type="PDB" id="2B92">
    <property type="method" value="X-ray"/>
    <property type="resolution" value="3.20 A"/>
    <property type="chains" value="A/B=1-317"/>
</dbReference>
<dbReference type="PDB" id="2BC9">
    <property type="method" value="X-ray"/>
    <property type="resolution" value="2.80 A"/>
    <property type="chains" value="A=1-317"/>
</dbReference>
<dbReference type="PDB" id="2D4H">
    <property type="method" value="X-ray"/>
    <property type="resolution" value="2.90 A"/>
    <property type="chains" value="A/B=1-317"/>
</dbReference>
<dbReference type="PDB" id="6K1Z">
    <property type="method" value="X-ray"/>
    <property type="resolution" value="2.31 A"/>
    <property type="chains" value="A=1-592"/>
</dbReference>
<dbReference type="PDB" id="6K2D">
    <property type="method" value="X-ray"/>
    <property type="resolution" value="3.60 A"/>
    <property type="chains" value="A=1-479"/>
</dbReference>
<dbReference type="PDB" id="6LOJ">
    <property type="method" value="X-ray"/>
    <property type="resolution" value="3.72 A"/>
    <property type="chains" value="B=1-592"/>
</dbReference>
<dbReference type="PDB" id="8CQB">
    <property type="method" value="EM"/>
    <property type="resolution" value="3.70 A"/>
    <property type="chains" value="A/B=1-592"/>
</dbReference>
<dbReference type="PDB" id="8Q4L">
    <property type="method" value="EM"/>
    <property type="resolution" value="5.12 A"/>
    <property type="chains" value="A=7-583"/>
</dbReference>
<dbReference type="PDB" id="8R1A">
    <property type="method" value="EM"/>
    <property type="resolution" value="26.80 A"/>
    <property type="chains" value="A/B/C/D/E/F=2-592"/>
</dbReference>
<dbReference type="PDBsum" id="1DG3"/>
<dbReference type="PDBsum" id="1F5N"/>
<dbReference type="PDBsum" id="2B8W"/>
<dbReference type="PDBsum" id="2B92"/>
<dbReference type="PDBsum" id="2BC9"/>
<dbReference type="PDBsum" id="2D4H"/>
<dbReference type="PDBsum" id="6K1Z"/>
<dbReference type="PDBsum" id="6K2D"/>
<dbReference type="PDBsum" id="6LOJ"/>
<dbReference type="PDBsum" id="8CQB"/>
<dbReference type="PDBsum" id="8Q4L"/>
<dbReference type="PDBsum" id="8R1A"/>
<dbReference type="EMDB" id="EMD-16794"/>
<dbReference type="EMDB" id="EMD-18149"/>
<dbReference type="EMDB" id="EMD-18698"/>
<dbReference type="SASBDB" id="P32455"/>
<dbReference type="SMR" id="P32455"/>
<dbReference type="BioGRID" id="108903">
    <property type="interactions" value="43"/>
</dbReference>
<dbReference type="CORUM" id="P32455"/>
<dbReference type="DIP" id="DIP-60423N"/>
<dbReference type="FunCoup" id="P32455">
    <property type="interactions" value="257"/>
</dbReference>
<dbReference type="IntAct" id="P32455">
    <property type="interactions" value="21"/>
</dbReference>
<dbReference type="MINT" id="P32455"/>
<dbReference type="STRING" id="9606.ENSP00000359504"/>
<dbReference type="GlyGen" id="P32455">
    <property type="glycosylation" value="1 site, 1 O-linked glycan (1 site)"/>
</dbReference>
<dbReference type="iPTMnet" id="P32455"/>
<dbReference type="MetOSite" id="P32455"/>
<dbReference type="PhosphoSitePlus" id="P32455"/>
<dbReference type="SwissPalm" id="P32455"/>
<dbReference type="BioMuta" id="GBP1"/>
<dbReference type="DMDM" id="311033383"/>
<dbReference type="jPOST" id="P32455"/>
<dbReference type="MassIVE" id="P32455"/>
<dbReference type="PaxDb" id="9606-ENSP00000359504"/>
<dbReference type="PeptideAtlas" id="P32455"/>
<dbReference type="ProteomicsDB" id="54877"/>
<dbReference type="Pumba" id="P32455"/>
<dbReference type="Antibodypedia" id="4224">
    <property type="antibodies" value="342 antibodies from 34 providers"/>
</dbReference>
<dbReference type="DNASU" id="2633"/>
<dbReference type="Ensembl" id="ENST00000370473.5">
    <property type="protein sequence ID" value="ENSP00000359504.4"/>
    <property type="gene ID" value="ENSG00000117228.11"/>
</dbReference>
<dbReference type="GeneID" id="2633"/>
<dbReference type="KEGG" id="hsa:2633"/>
<dbReference type="MANE-Select" id="ENST00000370473.5">
    <property type="protein sequence ID" value="ENSP00000359504.4"/>
    <property type="RefSeq nucleotide sequence ID" value="NM_002053.3"/>
    <property type="RefSeq protein sequence ID" value="NP_002044.2"/>
</dbReference>
<dbReference type="UCSC" id="uc001dmx.3">
    <property type="organism name" value="human"/>
</dbReference>
<dbReference type="AGR" id="HGNC:4182"/>
<dbReference type="CTD" id="2633"/>
<dbReference type="DisGeNET" id="2633"/>
<dbReference type="GeneCards" id="GBP1"/>
<dbReference type="HGNC" id="HGNC:4182">
    <property type="gene designation" value="GBP1"/>
</dbReference>
<dbReference type="HPA" id="ENSG00000117228">
    <property type="expression patterns" value="Tissue enhanced (liver)"/>
</dbReference>
<dbReference type="MIM" id="600411">
    <property type="type" value="gene"/>
</dbReference>
<dbReference type="neXtProt" id="NX_P32455"/>
<dbReference type="OpenTargets" id="ENSG00000117228"/>
<dbReference type="PharmGKB" id="PA28596"/>
<dbReference type="VEuPathDB" id="HostDB:ENSG00000117228"/>
<dbReference type="eggNOG" id="KOG2037">
    <property type="taxonomic scope" value="Eukaryota"/>
</dbReference>
<dbReference type="GeneTree" id="ENSGT00940000156840"/>
<dbReference type="HOGENOM" id="CLU_018608_2_2_1"/>
<dbReference type="InParanoid" id="P32455"/>
<dbReference type="OMA" id="MWCIPYP"/>
<dbReference type="OrthoDB" id="2135133at2759"/>
<dbReference type="PAN-GO" id="P32455">
    <property type="GO annotations" value="4 GO annotations based on evolutionary models"/>
</dbReference>
<dbReference type="PhylomeDB" id="P32455"/>
<dbReference type="TreeFam" id="TF331602"/>
<dbReference type="PathwayCommons" id="P32455"/>
<dbReference type="Reactome" id="R-HSA-877300">
    <property type="pathway name" value="Interferon gamma signaling"/>
</dbReference>
<dbReference type="SignaLink" id="P32455"/>
<dbReference type="BioGRID-ORCS" id="2633">
    <property type="hits" value="22 hits in 1144 CRISPR screens"/>
</dbReference>
<dbReference type="ChiTaRS" id="GBP1">
    <property type="organism name" value="human"/>
</dbReference>
<dbReference type="EvolutionaryTrace" id="P32455"/>
<dbReference type="GeneWiki" id="GBP1"/>
<dbReference type="GenomeRNAi" id="2633"/>
<dbReference type="Pharos" id="P32455">
    <property type="development level" value="Tbio"/>
</dbReference>
<dbReference type="PRO" id="PR:P32455"/>
<dbReference type="Proteomes" id="UP000005640">
    <property type="component" value="Chromosome 1"/>
</dbReference>
<dbReference type="RNAct" id="P32455">
    <property type="molecule type" value="protein"/>
</dbReference>
<dbReference type="Bgee" id="ENSG00000117228">
    <property type="expression patterns" value="Expressed in pericardium and 196 other cell types or tissues"/>
</dbReference>
<dbReference type="GO" id="GO:0015629">
    <property type="term" value="C:actin cytoskeleton"/>
    <property type="evidence" value="ECO:0000314"/>
    <property type="project" value="UniProtKB"/>
</dbReference>
<dbReference type="GO" id="GO:0005737">
    <property type="term" value="C:cytoplasm"/>
    <property type="evidence" value="ECO:0000314"/>
    <property type="project" value="UniProtKB"/>
</dbReference>
<dbReference type="GO" id="GO:0031410">
    <property type="term" value="C:cytoplasmic vesicle"/>
    <property type="evidence" value="ECO:0000314"/>
    <property type="project" value="UniProt"/>
</dbReference>
<dbReference type="GO" id="GO:0030659">
    <property type="term" value="C:cytoplasmic vesicle membrane"/>
    <property type="evidence" value="ECO:0007669"/>
    <property type="project" value="UniProtKB-SubCell"/>
</dbReference>
<dbReference type="GO" id="GO:0005829">
    <property type="term" value="C:cytosol"/>
    <property type="evidence" value="ECO:0000314"/>
    <property type="project" value="UniProtKB"/>
</dbReference>
<dbReference type="GO" id="GO:0005576">
    <property type="term" value="C:extracellular region"/>
    <property type="evidence" value="ECO:0007669"/>
    <property type="project" value="UniProtKB-SubCell"/>
</dbReference>
<dbReference type="GO" id="GO:0005794">
    <property type="term" value="C:Golgi apparatus"/>
    <property type="evidence" value="ECO:0000314"/>
    <property type="project" value="UniProtKB"/>
</dbReference>
<dbReference type="GO" id="GO:0000139">
    <property type="term" value="C:Golgi membrane"/>
    <property type="evidence" value="ECO:0007669"/>
    <property type="project" value="UniProtKB-SubCell"/>
</dbReference>
<dbReference type="GO" id="GO:0005886">
    <property type="term" value="C:plasma membrane"/>
    <property type="evidence" value="ECO:0007669"/>
    <property type="project" value="UniProtKB-SubCell"/>
</dbReference>
<dbReference type="GO" id="GO:0106139">
    <property type="term" value="C:symbiont cell surface"/>
    <property type="evidence" value="ECO:0000314"/>
    <property type="project" value="UniProtKB"/>
</dbReference>
<dbReference type="GO" id="GO:0012506">
    <property type="term" value="C:vesicle membrane"/>
    <property type="evidence" value="ECO:0000314"/>
    <property type="project" value="UniProtKB"/>
</dbReference>
<dbReference type="GO" id="GO:0003779">
    <property type="term" value="F:actin binding"/>
    <property type="evidence" value="ECO:0000314"/>
    <property type="project" value="UniProtKB"/>
</dbReference>
<dbReference type="GO" id="GO:0019955">
    <property type="term" value="F:cytokine binding"/>
    <property type="evidence" value="ECO:0000353"/>
    <property type="project" value="UniProtKB"/>
</dbReference>
<dbReference type="GO" id="GO:0019899">
    <property type="term" value="F:enzyme binding"/>
    <property type="evidence" value="ECO:0000353"/>
    <property type="project" value="UniProtKB"/>
</dbReference>
<dbReference type="GO" id="GO:0003925">
    <property type="term" value="F:G protein activity"/>
    <property type="evidence" value="ECO:0000314"/>
    <property type="project" value="UniProtKB"/>
</dbReference>
<dbReference type="GO" id="GO:0019003">
    <property type="term" value="F:GDP binding"/>
    <property type="evidence" value="ECO:0000314"/>
    <property type="project" value="CAFA"/>
</dbReference>
<dbReference type="GO" id="GO:0004382">
    <property type="term" value="F:GDP phosphatase activity"/>
    <property type="evidence" value="ECO:0000314"/>
    <property type="project" value="UniProtKB"/>
</dbReference>
<dbReference type="GO" id="GO:0005525">
    <property type="term" value="F:GTP binding"/>
    <property type="evidence" value="ECO:0000314"/>
    <property type="project" value="UniProtKB"/>
</dbReference>
<dbReference type="GO" id="GO:0003924">
    <property type="term" value="F:GTPase activity"/>
    <property type="evidence" value="ECO:0000314"/>
    <property type="project" value="UniProtKB"/>
</dbReference>
<dbReference type="GO" id="GO:0051879">
    <property type="term" value="F:Hsp90 protein binding"/>
    <property type="evidence" value="ECO:0000353"/>
    <property type="project" value="UniProtKB"/>
</dbReference>
<dbReference type="GO" id="GO:0042802">
    <property type="term" value="F:identical protein binding"/>
    <property type="evidence" value="ECO:0000353"/>
    <property type="project" value="IntAct"/>
</dbReference>
<dbReference type="GO" id="GO:0001530">
    <property type="term" value="F:lipopolysaccharide binding"/>
    <property type="evidence" value="ECO:0000314"/>
    <property type="project" value="UniProtKB"/>
</dbReference>
<dbReference type="GO" id="GO:0042803">
    <property type="term" value="F:protein homodimerization activity"/>
    <property type="evidence" value="ECO:0000314"/>
    <property type="project" value="UniProtKB"/>
</dbReference>
<dbReference type="GO" id="GO:0030507">
    <property type="term" value="F:spectrin binding"/>
    <property type="evidence" value="ECO:0000353"/>
    <property type="project" value="UniProtKB"/>
</dbReference>
<dbReference type="GO" id="GO:0071347">
    <property type="term" value="P:cellular response to interleukin-1"/>
    <property type="evidence" value="ECO:0000270"/>
    <property type="project" value="UniProtKB"/>
</dbReference>
<dbReference type="GO" id="GO:0071356">
    <property type="term" value="P:cellular response to tumor necrosis factor"/>
    <property type="evidence" value="ECO:0000270"/>
    <property type="project" value="UniProtKB"/>
</dbReference>
<dbReference type="GO" id="GO:0071346">
    <property type="term" value="P:cellular response to type II interferon"/>
    <property type="evidence" value="ECO:0000314"/>
    <property type="project" value="UniProtKB"/>
</dbReference>
<dbReference type="GO" id="GO:0051715">
    <property type="term" value="P:cytolysis in another organism"/>
    <property type="evidence" value="ECO:0000314"/>
    <property type="project" value="UniProtKB"/>
</dbReference>
<dbReference type="GO" id="GO:0042742">
    <property type="term" value="P:defense response to bacterium"/>
    <property type="evidence" value="ECO:0000314"/>
    <property type="project" value="UniProtKB"/>
</dbReference>
<dbReference type="GO" id="GO:0042832">
    <property type="term" value="P:defense response to protozoan"/>
    <property type="evidence" value="ECO:0000314"/>
    <property type="project" value="UniProtKB"/>
</dbReference>
<dbReference type="GO" id="GO:0051607">
    <property type="term" value="P:defense response to virus"/>
    <property type="evidence" value="ECO:0007669"/>
    <property type="project" value="UniProtKB-KW"/>
</dbReference>
<dbReference type="GO" id="GO:0045087">
    <property type="term" value="P:innate immune response"/>
    <property type="evidence" value="ECO:0000314"/>
    <property type="project" value="UniProtKB"/>
</dbReference>
<dbReference type="GO" id="GO:0070373">
    <property type="term" value="P:negative regulation of ERK1 and ERK2 cascade"/>
    <property type="evidence" value="ECO:0000315"/>
    <property type="project" value="UniProtKB"/>
</dbReference>
<dbReference type="GO" id="GO:0032703">
    <property type="term" value="P:negative regulation of interleukin-2 production"/>
    <property type="evidence" value="ECO:0000315"/>
    <property type="project" value="UniProtKB"/>
</dbReference>
<dbReference type="GO" id="GO:1903077">
    <property type="term" value="P:negative regulation of protein localization to plasma membrane"/>
    <property type="evidence" value="ECO:0000315"/>
    <property type="project" value="UniProtKB"/>
</dbReference>
<dbReference type="GO" id="GO:1900025">
    <property type="term" value="P:negative regulation of substrate adhesion-dependent cell spreading"/>
    <property type="evidence" value="ECO:0000315"/>
    <property type="project" value="UniProtKB"/>
</dbReference>
<dbReference type="GO" id="GO:0050860">
    <property type="term" value="P:negative regulation of T cell receptor signaling pathway"/>
    <property type="evidence" value="ECO:0000315"/>
    <property type="project" value="UniProtKB"/>
</dbReference>
<dbReference type="GO" id="GO:0160075">
    <property type="term" value="P:non-canonical inflammasome complex assembly"/>
    <property type="evidence" value="ECO:0000314"/>
    <property type="project" value="UniProtKB"/>
</dbReference>
<dbReference type="GO" id="GO:0140639">
    <property type="term" value="P:positive regulation of pyroptotic inflammatory response"/>
    <property type="evidence" value="ECO:0000314"/>
    <property type="project" value="UniProtKB"/>
</dbReference>
<dbReference type="GO" id="GO:0072665">
    <property type="term" value="P:protein localization to vacuole"/>
    <property type="evidence" value="ECO:0000314"/>
    <property type="project" value="UniProtKB"/>
</dbReference>
<dbReference type="GO" id="GO:0050848">
    <property type="term" value="P:regulation of calcium-mediated signaling"/>
    <property type="evidence" value="ECO:0000315"/>
    <property type="project" value="UniProtKB"/>
</dbReference>
<dbReference type="GO" id="GO:1903076">
    <property type="term" value="P:regulation of protein localization to plasma membrane"/>
    <property type="evidence" value="ECO:0000316"/>
    <property type="project" value="UniProtKB"/>
</dbReference>
<dbReference type="CDD" id="cd01851">
    <property type="entry name" value="GBP"/>
    <property type="match status" value="1"/>
</dbReference>
<dbReference type="CDD" id="cd16269">
    <property type="entry name" value="GBP_C"/>
    <property type="match status" value="1"/>
</dbReference>
<dbReference type="FunFam" id="1.20.1000.10:FF:000001">
    <property type="entry name" value="Guanylate binding protein 1"/>
    <property type="match status" value="1"/>
</dbReference>
<dbReference type="FunFam" id="3.40.50.300:FF:000422">
    <property type="entry name" value="Guanylate-binding protein 1"/>
    <property type="match status" value="1"/>
</dbReference>
<dbReference type="Gene3D" id="1.20.1000.10">
    <property type="entry name" value="Guanylate-binding protein, C-terminal domain"/>
    <property type="match status" value="1"/>
</dbReference>
<dbReference type="Gene3D" id="3.40.50.300">
    <property type="entry name" value="P-loop containing nucleotide triphosphate hydrolases"/>
    <property type="match status" value="1"/>
</dbReference>
<dbReference type="InterPro" id="IPR030386">
    <property type="entry name" value="G_GB1_RHD3_dom"/>
</dbReference>
<dbReference type="InterPro" id="IPR037684">
    <property type="entry name" value="GBP_C"/>
</dbReference>
<dbReference type="InterPro" id="IPR003191">
    <property type="entry name" value="Guanylate-bd/ATL_C"/>
</dbReference>
<dbReference type="InterPro" id="IPR036543">
    <property type="entry name" value="Guanylate-bd_C_sf"/>
</dbReference>
<dbReference type="InterPro" id="IPR015894">
    <property type="entry name" value="Guanylate-bd_N"/>
</dbReference>
<dbReference type="InterPro" id="IPR027417">
    <property type="entry name" value="P-loop_NTPase"/>
</dbReference>
<dbReference type="PANTHER" id="PTHR10751">
    <property type="entry name" value="GUANYLATE BINDING PROTEIN"/>
    <property type="match status" value="1"/>
</dbReference>
<dbReference type="Pfam" id="PF02263">
    <property type="entry name" value="GBP"/>
    <property type="match status" value="1"/>
</dbReference>
<dbReference type="Pfam" id="PF02841">
    <property type="entry name" value="GBP_C"/>
    <property type="match status" value="1"/>
</dbReference>
<dbReference type="SUPFAM" id="SSF48340">
    <property type="entry name" value="Interferon-induced guanylate-binding protein 1 (GBP1), C-terminal domain"/>
    <property type="match status" value="1"/>
</dbReference>
<dbReference type="SUPFAM" id="SSF52540">
    <property type="entry name" value="P-loop containing nucleoside triphosphate hydrolases"/>
    <property type="match status" value="1"/>
</dbReference>
<dbReference type="PROSITE" id="PS51715">
    <property type="entry name" value="G_GB1_RHD3"/>
    <property type="match status" value="1"/>
</dbReference>
<organism>
    <name type="scientific">Homo sapiens</name>
    <name type="common">Human</name>
    <dbReference type="NCBI Taxonomy" id="9606"/>
    <lineage>
        <taxon>Eukaryota</taxon>
        <taxon>Metazoa</taxon>
        <taxon>Chordata</taxon>
        <taxon>Craniata</taxon>
        <taxon>Vertebrata</taxon>
        <taxon>Euteleostomi</taxon>
        <taxon>Mammalia</taxon>
        <taxon>Eutheria</taxon>
        <taxon>Euarchontoglires</taxon>
        <taxon>Primates</taxon>
        <taxon>Haplorrhini</taxon>
        <taxon>Catarrhini</taxon>
        <taxon>Hominidae</taxon>
        <taxon>Homo</taxon>
    </lineage>
</organism>
<evidence type="ECO:0000250" key="1">
    <source>
        <dbReference type="UniProtKB" id="Q01514"/>
    </source>
</evidence>
<evidence type="ECO:0000255" key="2">
    <source>
        <dbReference type="PROSITE-ProRule" id="PRU01052"/>
    </source>
</evidence>
<evidence type="ECO:0000269" key="3">
    <source>
    </source>
</evidence>
<evidence type="ECO:0000269" key="4">
    <source>
    </source>
</evidence>
<evidence type="ECO:0000269" key="5">
    <source>
    </source>
</evidence>
<evidence type="ECO:0000269" key="6">
    <source>
    </source>
</evidence>
<evidence type="ECO:0000269" key="7">
    <source>
    </source>
</evidence>
<evidence type="ECO:0000269" key="8">
    <source>
    </source>
</evidence>
<evidence type="ECO:0000269" key="9">
    <source>
    </source>
</evidence>
<evidence type="ECO:0000269" key="10">
    <source>
    </source>
</evidence>
<evidence type="ECO:0000269" key="11">
    <source>
    </source>
</evidence>
<evidence type="ECO:0000269" key="12">
    <source>
    </source>
</evidence>
<evidence type="ECO:0000269" key="13">
    <source>
    </source>
</evidence>
<evidence type="ECO:0000269" key="14">
    <source>
    </source>
</evidence>
<evidence type="ECO:0000269" key="15">
    <source>
    </source>
</evidence>
<evidence type="ECO:0000269" key="16">
    <source>
    </source>
</evidence>
<evidence type="ECO:0000269" key="17">
    <source>
    </source>
</evidence>
<evidence type="ECO:0000269" key="18">
    <source>
    </source>
</evidence>
<evidence type="ECO:0000269" key="19">
    <source>
    </source>
</evidence>
<evidence type="ECO:0000269" key="20">
    <source>
    </source>
</evidence>
<evidence type="ECO:0000269" key="21">
    <source>
    </source>
</evidence>
<evidence type="ECO:0000269" key="22">
    <source>
    </source>
</evidence>
<evidence type="ECO:0000269" key="23">
    <source>
    </source>
</evidence>
<evidence type="ECO:0000269" key="24">
    <source>
    </source>
</evidence>
<evidence type="ECO:0000269" key="25">
    <source>
    </source>
</evidence>
<evidence type="ECO:0000269" key="26">
    <source ref="2"/>
</evidence>
<evidence type="ECO:0000303" key="27">
    <source>
    </source>
</evidence>
<evidence type="ECO:0000303" key="28">
    <source>
    </source>
</evidence>
<evidence type="ECO:0000303" key="29">
    <source>
    </source>
</evidence>
<evidence type="ECO:0000305" key="30"/>
<evidence type="ECO:0000305" key="31">
    <source>
    </source>
</evidence>
<evidence type="ECO:0000305" key="32">
    <source>
    </source>
</evidence>
<evidence type="ECO:0000305" key="33">
    <source>
    </source>
</evidence>
<evidence type="ECO:0000312" key="34">
    <source>
        <dbReference type="HGNC" id="HGNC:4182"/>
    </source>
</evidence>
<evidence type="ECO:0007744" key="35">
    <source>
        <dbReference type="PDB" id="1F5N"/>
    </source>
</evidence>
<evidence type="ECO:0007744" key="36">
    <source>
        <dbReference type="PDB" id="2B8W"/>
    </source>
</evidence>
<evidence type="ECO:0007744" key="37">
    <source>
        <dbReference type="PDB" id="2B92"/>
    </source>
</evidence>
<evidence type="ECO:0007744" key="38">
    <source>
        <dbReference type="PDB" id="2BC9"/>
    </source>
</evidence>
<evidence type="ECO:0007744" key="39">
    <source>
        <dbReference type="PDB" id="2D4H"/>
    </source>
</evidence>
<evidence type="ECO:0007744" key="40">
    <source>
        <dbReference type="PDB" id="6K1Z"/>
    </source>
</evidence>
<evidence type="ECO:0007744" key="41">
    <source>
        <dbReference type="PDB" id="6K2D"/>
    </source>
</evidence>
<evidence type="ECO:0007744" key="42">
    <source>
        <dbReference type="PDB" id="6LOJ"/>
    </source>
</evidence>
<evidence type="ECO:0007744" key="43">
    <source>
        <dbReference type="PDB" id="8Q4L"/>
    </source>
</evidence>
<evidence type="ECO:0007829" key="44">
    <source>
        <dbReference type="PDB" id="1DG3"/>
    </source>
</evidence>
<evidence type="ECO:0007829" key="45">
    <source>
        <dbReference type="PDB" id="1F5N"/>
    </source>
</evidence>
<evidence type="ECO:0007829" key="46">
    <source>
        <dbReference type="PDB" id="2B8W"/>
    </source>
</evidence>
<evidence type="ECO:0007829" key="47">
    <source>
        <dbReference type="PDB" id="2D4H"/>
    </source>
</evidence>
<feature type="chain" id="PRO_0000190963" description="Guanylate-binding protein 1">
    <location>
        <begin position="1"/>
        <end position="589"/>
    </location>
</feature>
<feature type="propeptide" id="PRO_0000396777" description="Removed in mature form" evidence="33">
    <location>
        <begin position="590"/>
        <end position="592"/>
    </location>
</feature>
<feature type="domain" description="GB1/RHD3-type G" evidence="2">
    <location>
        <begin position="35"/>
        <end position="278"/>
    </location>
</feature>
<feature type="region of interest" description="GTPase domain (Globular)" evidence="31">
    <location>
        <begin position="1"/>
        <end position="311"/>
    </location>
</feature>
<feature type="binding site" evidence="3 4 7 35 36 37 39">
    <location>
        <begin position="45"/>
        <end position="52"/>
    </location>
    <ligand>
        <name>GTP</name>
        <dbReference type="ChEBI" id="CHEBI:37565"/>
    </ligand>
</feature>
<feature type="binding site" evidence="3 4 7 35 36 37 39">
    <location>
        <begin position="67"/>
        <end position="69"/>
    </location>
    <ligand>
        <name>GTP</name>
        <dbReference type="ChEBI" id="CHEBI:37565"/>
    </ligand>
</feature>
<feature type="binding site" evidence="3 4 35">
    <location>
        <begin position="97"/>
        <end position="101"/>
    </location>
    <ligand>
        <name>GTP</name>
        <dbReference type="ChEBI" id="CHEBI:37565"/>
    </ligand>
</feature>
<feature type="modified residue" description="Phosphoserine; by PIM1" evidence="23">
    <location>
        <position position="156"/>
    </location>
</feature>
<feature type="modified residue" description="Cysteine methyl ester" evidence="33">
    <location>
        <position position="589"/>
    </location>
</feature>
<feature type="modified residue" description="Phosphothreonine; by PIM1" evidence="23">
    <location>
        <position position="590"/>
    </location>
</feature>
<feature type="lipid moiety-binding region" description="S-farnesyl cysteine" evidence="15 18 19 25">
    <location>
        <position position="589"/>
    </location>
</feature>
<feature type="cross-link" description="(Microbial infection) Glycyl lysine isopeptide (Lys-Gly) (interchain with G-Cter in ubiquitin)" evidence="15">
    <location>
        <position position="207"/>
    </location>
</feature>
<feature type="cross-link" description="(Microbial infection) Glycyl lysine isopeptide (Lys-Gly) (interchain with G-Cter in ubiquitin)" evidence="15">
    <location>
        <position position="209"/>
    </location>
</feature>
<feature type="cross-link" description="(Microbial infection) Glycyl lysine isopeptide (Lys-Gly) (interchain with G-Cter in ubiquitin)" evidence="15">
    <location>
        <position position="210"/>
    </location>
</feature>
<feature type="cross-link" description="(Microbial infection) Glycyl lysine isopeptide (Lys-Gly) (interchain with G-Cter in ubiquitin)" evidence="15">
    <location>
        <position position="382"/>
    </location>
</feature>
<feature type="cross-link" description="(Microbial infection) Glycyl lysine isopeptide (Lys-Gly) (interchain with G-Cter in ubiquitin)" evidence="15">
    <location>
        <position position="562"/>
    </location>
</feature>
<feature type="cross-link" description="(Microbial infection) Glycyl lysine isopeptide (Lys-Gly) (interchain with G-Cter in ubiquitin)" evidence="15">
    <location>
        <position position="567"/>
    </location>
</feature>
<feature type="cross-link" description="(Microbial infection) Glycyl lysine isopeptide (Lys-Gly) (interchain with G-Cter in ubiquitin)" evidence="15">
    <location>
        <position position="573"/>
    </location>
</feature>
<feature type="cross-link" description="(Microbial infection) Glycyl lysine isopeptide (Lys-Gly) (interchain with G-Cter in ubiquitin)" evidence="15">
    <location>
        <position position="587"/>
    </location>
</feature>
<feature type="sequence variant" id="VAR_033950" description="In dbSNP:rs1048401.">
    <original>I</original>
    <variation>V</variation>
    <location>
        <position position="78"/>
    </location>
</feature>
<feature type="sequence variant" id="VAR_033951" description="In dbSNP:rs17130717.">
    <original>E</original>
    <variation>D</variation>
    <location>
        <position position="166"/>
    </location>
</feature>
<feature type="sequence variant" id="VAR_014849" description="In dbSNP:rs1048425." evidence="5 9 26">
    <original>T</original>
    <variation>S</variation>
    <location>
        <position position="349"/>
    </location>
</feature>
<feature type="sequence variant" id="VAR_046550" description="In dbSNP:rs1048443." evidence="5 9 26">
    <original>A</original>
    <variation>G</variation>
    <location>
        <position position="409"/>
    </location>
</feature>
<feature type="mutagenesis site" description="Abolished GTPase activity." evidence="13 15 19">
    <original>R</original>
    <variation>A</variation>
    <location>
        <position position="48"/>
    </location>
</feature>
<feature type="mutagenesis site" description="Loss of GTPase activity. Constitutively monomeric. Expressed throughout the cytoplasm, loss of vesicular accumulation. Impaired ability to promote pyroptosis in response to T.gondii infection." evidence="18 19 32">
    <original>K</original>
    <variation>A</variation>
    <location>
        <position position="51"/>
    </location>
</feature>
<feature type="mutagenesis site" description="Impaired homooligomarization and localization to bacterial surface." evidence="20">
    <original>KKK</original>
    <variation>AAA</variation>
    <location>
        <begin position="61"/>
        <end position="63"/>
    </location>
</feature>
<feature type="mutagenesis site" description="Abolished GDP hydrolysis." evidence="19">
    <original>H</original>
    <variation>A</variation>
    <location>
        <position position="74"/>
    </location>
</feature>
<feature type="mutagenesis site" description="Abolished GDPase activity." evidence="13">
    <original>K</original>
    <variation>A</variation>
    <location>
        <position position="76"/>
    </location>
</feature>
<feature type="mutagenesis site" description="Does not affect localization to bacterial surface." evidence="20">
    <original>KK</original>
    <variation>AA</variation>
    <location>
        <begin position="87"/>
        <end position="88"/>
    </location>
</feature>
<feature type="mutagenesis site" description="Reduced phosphorylation by PIM1." evidence="23">
    <original>R</original>
    <variation>A</variation>
    <location>
        <position position="151"/>
    </location>
</feature>
<feature type="mutagenesis site" description="Abolished phosphorylation by PIM1 and interaction with 14-3-3 protein sigma (SFN)." evidence="23">
    <original>RSKSSP</original>
    <variation>ASKSSA</variation>
    <location>
        <begin position="153"/>
        <end position="158"/>
    </location>
</feature>
<feature type="mutagenesis site" description="Abolished phosphorylation by PIM1." evidence="23">
    <original>R</original>
    <variation>A</variation>
    <location>
        <position position="153"/>
    </location>
</feature>
<feature type="mutagenesis site" description="Abolished phosphorylation by PIM1." evidence="23">
    <original>K</original>
    <variation>A</variation>
    <location>
        <position position="155"/>
    </location>
</feature>
<feature type="mutagenesis site" description="Reduced phosphorylation by PIM1, leading to hyperactivation and Golgi fragmentation." evidence="23">
    <original>S</original>
    <variation>A</variation>
    <location>
        <position position="156"/>
    </location>
</feature>
<feature type="mutagenesis site" description="No effect." evidence="23">
    <original>S</original>
    <variation>A</variation>
    <location>
        <position position="157"/>
    </location>
</feature>
<feature type="mutagenesis site" description="Strongly decreased nucleotide-binding." evidence="15">
    <original>D</original>
    <variation>N</variation>
    <location>
        <position position="184"/>
    </location>
</feature>
<feature type="mutagenesis site" description="Does not affect localization to bacterial surface." evidence="20">
    <original>KLKK</original>
    <variation>ALAA</variation>
    <location>
        <begin position="207"/>
        <end position="210"/>
    </location>
</feature>
<feature type="mutagenesis site" description="In 8KR mutant; abolished ubiquitination by S. flexneri IpaH9.8 when associated with R-209, R-210, R-382, R-562, R-567, R-573 and R-587." evidence="15">
    <original>K</original>
    <variation>R</variation>
    <location>
        <position position="207"/>
    </location>
</feature>
<feature type="mutagenesis site" description="In 8KR mutant; abolished ubiquitination by S. flexneri IpaH9.8 when associated with R-207, R-210, R-382, R-562, R-567, R-573 and R-587." evidence="15">
    <original>K</original>
    <variation>R</variation>
    <location>
        <position position="209"/>
    </location>
</feature>
<feature type="mutagenesis site" description="In 8KR mutant; abolished ubiquitination by S. flexneri IpaH9.8 when associated with R-207, R-209, R-382, R-562, R-567, R-573 and R-587." evidence="15">
    <original>K</original>
    <variation>R</variation>
    <location>
        <position position="210"/>
    </location>
</feature>
<feature type="mutagenesis site" description="Constitutively dimeric. Localizes at vesicle-like structures at the plasma membrane." evidence="11 18">
    <original>RK</original>
    <variation>EE</variation>
    <location>
        <begin position="227"/>
        <end position="228"/>
    </location>
</feature>
<feature type="mutagenesis site" description="Does not affect localization to bacterial surface." evidence="20">
    <original>RRK</original>
    <variation>AAA</variation>
    <location>
        <begin position="244"/>
        <end position="246"/>
    </location>
</feature>
<feature type="mutagenesis site" description="In 8KR mutant; abolished ubiquitination by S. flexneri IpaH9.8 when associated with R-207, R-209, R-210, R-562, R-567, R-573 and R-587." evidence="15">
    <original>K</original>
    <variation>R</variation>
    <location>
        <position position="382"/>
    </location>
</feature>
<feature type="mutagenesis site" description="No effect." evidence="23">
    <original>Y</original>
    <variation>F</variation>
    <location>
        <position position="427"/>
    </location>
</feature>
<feature type="mutagenesis site" description="In 8KR mutant; abolished ubiquitination by S. flexneri IpaH9.8 when associated with R-207, R-209, R-210, R-382, R-567, R-573 and R-587." evidence="15">
    <original>K</original>
    <variation>R</variation>
    <location>
        <position position="562"/>
    </location>
</feature>
<feature type="mutagenesis site" description="In 8KR mutant; abolished ubiquitination by S. flexneri IpaH9.8 when associated with R-207, R-209, R-210, R-382, R-562, R-573 and R-587." evidence="15">
    <original>K</original>
    <variation>R</variation>
    <location>
        <position position="567"/>
    </location>
</feature>
<feature type="mutagenesis site" description="In 8KR mutant; abolished ubiquitination by S. flexneri IpaH9.8 when associated with R-207, R-209, R-210, R-382, R-562, R-567 and R-587." evidence="15">
    <original>K</original>
    <variation>R</variation>
    <location>
        <position position="573"/>
    </location>
</feature>
<feature type="mutagenesis site" description="Abolished localization to pathogen-containing vacuoles. Abolished binding to bacterial surface." evidence="16 19">
    <original>RRR</original>
    <variation>AAA</variation>
    <location>
        <begin position="584"/>
        <end position="586"/>
    </location>
</feature>
<feature type="mutagenesis site" description="Abolished localization to pathogen-containing vacuoles." evidence="16">
    <location>
        <begin position="584"/>
        <end position="586"/>
    </location>
</feature>
<feature type="mutagenesis site" description="In 8KR mutant; abolished ubiquitination by S. flexneri IpaH9.8 when associated with R-207, R-209, R-210, R-382, R-562, R-567 and R-573." evidence="15">
    <original>K</original>
    <variation>R</variation>
    <location>
        <position position="587"/>
    </location>
</feature>
<feature type="mutagenesis site" description="Loss of association with membranes." evidence="11">
    <location>
        <begin position="589"/>
        <end position="592"/>
    </location>
</feature>
<feature type="mutagenesis site" description="Abolished farnesylation and recruitment to the pathogen-containing vacuoles or vacuole-escaped bacteria. Impaired ability to promote pyroptosis in response to T.gondii infection." evidence="15 18">
    <original>C</original>
    <variation>S</variation>
    <location>
        <position position="589"/>
    </location>
</feature>
<feature type="mutagenesis site" description="Does not affect interaction with 14-3-3 protein sigma (SFN)." evidence="23">
    <original>T</original>
    <variation>A</variation>
    <location>
        <position position="590"/>
    </location>
</feature>
<feature type="strand" evidence="45">
    <location>
        <begin position="11"/>
        <end position="17"/>
    </location>
</feature>
<feature type="strand" evidence="45">
    <location>
        <begin position="20"/>
        <end position="23"/>
    </location>
</feature>
<feature type="helix" evidence="45">
    <location>
        <begin position="25"/>
        <end position="32"/>
    </location>
</feature>
<feature type="strand" evidence="45">
    <location>
        <begin position="36"/>
        <end position="46"/>
    </location>
</feature>
<feature type="helix" evidence="44">
    <location>
        <begin position="47"/>
        <end position="49"/>
    </location>
</feature>
<feature type="helix" evidence="45">
    <location>
        <begin position="51"/>
        <end position="58"/>
    </location>
</feature>
<feature type="strand" evidence="46">
    <location>
        <begin position="62"/>
        <end position="65"/>
    </location>
</feature>
<feature type="strand" evidence="45">
    <location>
        <begin position="70"/>
        <end position="72"/>
    </location>
</feature>
<feature type="strand" evidence="45">
    <location>
        <begin position="77"/>
        <end position="84"/>
    </location>
</feature>
<feature type="strand" evidence="45">
    <location>
        <begin position="86"/>
        <end position="88"/>
    </location>
</feature>
<feature type="strand" evidence="45">
    <location>
        <begin position="92"/>
        <end position="98"/>
    </location>
</feature>
<feature type="turn" evidence="44">
    <location>
        <begin position="101"/>
        <end position="103"/>
    </location>
</feature>
<feature type="helix" evidence="45">
    <location>
        <begin position="104"/>
        <end position="106"/>
    </location>
</feature>
<feature type="helix" evidence="45">
    <location>
        <begin position="112"/>
        <end position="122"/>
    </location>
</feature>
<feature type="strand" evidence="45">
    <location>
        <begin position="124"/>
        <end position="132"/>
    </location>
</feature>
<feature type="helix" evidence="45">
    <location>
        <begin position="136"/>
        <end position="140"/>
    </location>
</feature>
<feature type="helix" evidence="45">
    <location>
        <begin position="143"/>
        <end position="146"/>
    </location>
</feature>
<feature type="helix" evidence="45">
    <location>
        <begin position="148"/>
        <end position="151"/>
    </location>
</feature>
<feature type="strand" evidence="47">
    <location>
        <begin position="156"/>
        <end position="158"/>
    </location>
</feature>
<feature type="helix" evidence="45">
    <location>
        <begin position="167"/>
        <end position="170"/>
    </location>
</feature>
<feature type="helix" evidence="45">
    <location>
        <begin position="171"/>
        <end position="174"/>
    </location>
</feature>
<feature type="strand" evidence="45">
    <location>
        <begin position="177"/>
        <end position="183"/>
    </location>
</feature>
<feature type="strand" evidence="45">
    <location>
        <begin position="192"/>
        <end position="194"/>
    </location>
</feature>
<feature type="helix" evidence="45">
    <location>
        <begin position="198"/>
        <end position="205"/>
    </location>
</feature>
<feature type="helix" evidence="45">
    <location>
        <begin position="214"/>
        <end position="229"/>
    </location>
</feature>
<feature type="strand" evidence="45">
    <location>
        <begin position="233"/>
        <end position="237"/>
    </location>
</feature>
<feature type="helix" evidence="45">
    <location>
        <begin position="244"/>
        <end position="252"/>
    </location>
</feature>
<feature type="helix" evidence="45">
    <location>
        <begin position="255"/>
        <end position="257"/>
    </location>
</feature>
<feature type="helix" evidence="45">
    <location>
        <begin position="260"/>
        <end position="276"/>
    </location>
</feature>
<feature type="turn" evidence="45">
    <location>
        <begin position="283"/>
        <end position="285"/>
    </location>
</feature>
<feature type="helix" evidence="45">
    <location>
        <begin position="290"/>
        <end position="306"/>
    </location>
</feature>
<feature type="helix" evidence="45">
    <location>
        <begin position="312"/>
        <end position="342"/>
    </location>
</feature>
<feature type="helix" evidence="45">
    <location>
        <begin position="350"/>
        <end position="371"/>
    </location>
</feature>
<feature type="helix" evidence="45">
    <location>
        <begin position="376"/>
        <end position="378"/>
    </location>
</feature>
<feature type="helix" evidence="45">
    <location>
        <begin position="379"/>
        <end position="423"/>
    </location>
</feature>
<feature type="turn" evidence="45">
    <location>
        <begin position="424"/>
        <end position="427"/>
    </location>
</feature>
<feature type="helix" evidence="45">
    <location>
        <begin position="432"/>
        <end position="449"/>
    </location>
</feature>
<feature type="helix" evidence="45">
    <location>
        <begin position="457"/>
        <end position="467"/>
    </location>
</feature>
<feature type="helix" evidence="45">
    <location>
        <begin position="469"/>
        <end position="478"/>
    </location>
</feature>
<feature type="strand" evidence="45">
    <location>
        <begin position="480"/>
        <end position="482"/>
    </location>
</feature>
<feature type="helix" evidence="45">
    <location>
        <begin position="484"/>
        <end position="563"/>
    </location>
</feature>
<feature type="helix" evidence="45">
    <location>
        <begin position="566"/>
        <end position="582"/>
    </location>
</feature>
<gene>
    <name evidence="28 34" type="primary">GBP1</name>
</gene>